<name>ATPB_LACSA</name>
<comment type="function">
    <text evidence="1">Produces ATP from ADP in the presence of a proton gradient across the membrane. The catalytic sites are hosted primarily by the beta subunits.</text>
</comment>
<comment type="catalytic activity">
    <reaction evidence="1">
        <text>ATP + H2O + 4 H(+)(in) = ADP + phosphate + 5 H(+)(out)</text>
        <dbReference type="Rhea" id="RHEA:57720"/>
        <dbReference type="ChEBI" id="CHEBI:15377"/>
        <dbReference type="ChEBI" id="CHEBI:15378"/>
        <dbReference type="ChEBI" id="CHEBI:30616"/>
        <dbReference type="ChEBI" id="CHEBI:43474"/>
        <dbReference type="ChEBI" id="CHEBI:456216"/>
        <dbReference type="EC" id="7.1.2.2"/>
    </reaction>
</comment>
<comment type="subunit">
    <text evidence="1">F-type ATPases have 2 components, CF(1) - the catalytic core - and CF(0) - the membrane proton channel. CF(1) has five subunits: alpha(3), beta(3), gamma(1), delta(1), epsilon(1). CF(0) has four main subunits: a(1), b(1), b'(1) and c(9-12).</text>
</comment>
<comment type="subcellular location">
    <subcellularLocation>
        <location evidence="1">Plastid</location>
        <location evidence="1">Chloroplast thylakoid membrane</location>
        <topology evidence="1">Peripheral membrane protein</topology>
    </subcellularLocation>
</comment>
<comment type="similarity">
    <text evidence="1">Belongs to the ATPase alpha/beta chains family.</text>
</comment>
<gene>
    <name evidence="1" type="primary">atpB</name>
</gene>
<sequence length="498" mass="53566">MRMNPTTSGSGVTTLDKKTLGRIAQIIGPVLDVAFPPGKMPNIYNALVVKGRDTAGQPINVTCEVQQLLGNNRVRAVAMSATDGLTRGMDVIDTGAPLSVPVGGATLGRIFNVLGEPVDNLGPVDTSTTFPIHRSAPAFIQLDTKLSIFETGIKVVDLLAPYRRGGKIGLFGGAGVGKTVLIMELINNIAKAHGGVSVFGGVGERTREGNDLYMEMKESGVINEKNIPESKVALVYGQMNEPPGARMRVGLTALTMAEYFRDVNEQDVLLFIDNIFRFVQAGSEVSALLGRMPSAVGYQPTLSTEMGSLQERITSTKEGSITSIQAVYVPADDLTDPAPATTFAHLDATTVLSRGLAAKGIYPAVDPLDSTSTMLQPRIVGEEHYDTAQEVKQTLQRYKELQDIIAILGLDELSEEDRLTVARARKIERFLSQPFFVAEVFTGSPGKYVGLAETIRGFQLILSGELDGLPEQAFYLVGNIDEATAKAMNLEMESNLKK</sequence>
<organism>
    <name type="scientific">Lactuca sativa</name>
    <name type="common">Garden lettuce</name>
    <dbReference type="NCBI Taxonomy" id="4236"/>
    <lineage>
        <taxon>Eukaryota</taxon>
        <taxon>Viridiplantae</taxon>
        <taxon>Streptophyta</taxon>
        <taxon>Embryophyta</taxon>
        <taxon>Tracheophyta</taxon>
        <taxon>Spermatophyta</taxon>
        <taxon>Magnoliopsida</taxon>
        <taxon>eudicotyledons</taxon>
        <taxon>Gunneridae</taxon>
        <taxon>Pentapetalae</taxon>
        <taxon>asterids</taxon>
        <taxon>campanulids</taxon>
        <taxon>Asterales</taxon>
        <taxon>Asteraceae</taxon>
        <taxon>Cichorioideae</taxon>
        <taxon>Cichorieae</taxon>
        <taxon>Lactucinae</taxon>
        <taxon>Lactuca</taxon>
    </lineage>
</organism>
<evidence type="ECO:0000255" key="1">
    <source>
        <dbReference type="HAMAP-Rule" id="MF_01347"/>
    </source>
</evidence>
<keyword id="KW-0066">ATP synthesis</keyword>
<keyword id="KW-0067">ATP-binding</keyword>
<keyword id="KW-0139">CF(1)</keyword>
<keyword id="KW-0150">Chloroplast</keyword>
<keyword id="KW-0375">Hydrogen ion transport</keyword>
<keyword id="KW-0406">Ion transport</keyword>
<keyword id="KW-0472">Membrane</keyword>
<keyword id="KW-0547">Nucleotide-binding</keyword>
<keyword id="KW-0934">Plastid</keyword>
<keyword id="KW-0793">Thylakoid</keyword>
<keyword id="KW-1278">Translocase</keyword>
<keyword id="KW-0813">Transport</keyword>
<dbReference type="EC" id="7.1.2.2" evidence="1"/>
<dbReference type="EMBL" id="AP007232">
    <property type="protein sequence ID" value="BAE47601.1"/>
    <property type="molecule type" value="Genomic_DNA"/>
</dbReference>
<dbReference type="EMBL" id="DQ383816">
    <property type="protein sequence ID" value="ABD47240.1"/>
    <property type="molecule type" value="Genomic_DNA"/>
</dbReference>
<dbReference type="RefSeq" id="YP_398336.1">
    <property type="nucleotide sequence ID" value="NC_007578.1"/>
</dbReference>
<dbReference type="SMR" id="Q332X1"/>
<dbReference type="GeneID" id="3772895"/>
<dbReference type="KEGG" id="lsv:3772895"/>
<dbReference type="OrthoDB" id="1562023at2759"/>
<dbReference type="GO" id="GO:0009535">
    <property type="term" value="C:chloroplast thylakoid membrane"/>
    <property type="evidence" value="ECO:0007669"/>
    <property type="project" value="UniProtKB-SubCell"/>
</dbReference>
<dbReference type="GO" id="GO:0045259">
    <property type="term" value="C:proton-transporting ATP synthase complex"/>
    <property type="evidence" value="ECO:0007669"/>
    <property type="project" value="UniProtKB-KW"/>
</dbReference>
<dbReference type="GO" id="GO:0005524">
    <property type="term" value="F:ATP binding"/>
    <property type="evidence" value="ECO:0007669"/>
    <property type="project" value="UniProtKB-UniRule"/>
</dbReference>
<dbReference type="GO" id="GO:0016887">
    <property type="term" value="F:ATP hydrolysis activity"/>
    <property type="evidence" value="ECO:0007669"/>
    <property type="project" value="InterPro"/>
</dbReference>
<dbReference type="GO" id="GO:0046933">
    <property type="term" value="F:proton-transporting ATP synthase activity, rotational mechanism"/>
    <property type="evidence" value="ECO:0007669"/>
    <property type="project" value="UniProtKB-UniRule"/>
</dbReference>
<dbReference type="CDD" id="cd18110">
    <property type="entry name" value="ATP-synt_F1_beta_C"/>
    <property type="match status" value="1"/>
</dbReference>
<dbReference type="CDD" id="cd18115">
    <property type="entry name" value="ATP-synt_F1_beta_N"/>
    <property type="match status" value="1"/>
</dbReference>
<dbReference type="CDD" id="cd01133">
    <property type="entry name" value="F1-ATPase_beta_CD"/>
    <property type="match status" value="1"/>
</dbReference>
<dbReference type="FunFam" id="1.10.1140.10:FF:000001">
    <property type="entry name" value="ATP synthase subunit beta"/>
    <property type="match status" value="1"/>
</dbReference>
<dbReference type="FunFam" id="3.40.50.300:FF:000004">
    <property type="entry name" value="ATP synthase subunit beta"/>
    <property type="match status" value="1"/>
</dbReference>
<dbReference type="FunFam" id="2.40.10.170:FF:000002">
    <property type="entry name" value="ATP synthase subunit beta, chloroplastic"/>
    <property type="match status" value="1"/>
</dbReference>
<dbReference type="Gene3D" id="2.40.10.170">
    <property type="match status" value="1"/>
</dbReference>
<dbReference type="Gene3D" id="1.10.1140.10">
    <property type="entry name" value="Bovine Mitochondrial F1-atpase, Atp Synthase Beta Chain, Chain D, domain 3"/>
    <property type="match status" value="1"/>
</dbReference>
<dbReference type="Gene3D" id="3.40.50.300">
    <property type="entry name" value="P-loop containing nucleotide triphosphate hydrolases"/>
    <property type="match status" value="1"/>
</dbReference>
<dbReference type="HAMAP" id="MF_01347">
    <property type="entry name" value="ATP_synth_beta_bact"/>
    <property type="match status" value="1"/>
</dbReference>
<dbReference type="InterPro" id="IPR003593">
    <property type="entry name" value="AAA+_ATPase"/>
</dbReference>
<dbReference type="InterPro" id="IPR055190">
    <property type="entry name" value="ATP-synt_VA_C"/>
</dbReference>
<dbReference type="InterPro" id="IPR005722">
    <property type="entry name" value="ATP_synth_F1_bsu"/>
</dbReference>
<dbReference type="InterPro" id="IPR020003">
    <property type="entry name" value="ATPase_a/bsu_AS"/>
</dbReference>
<dbReference type="InterPro" id="IPR050053">
    <property type="entry name" value="ATPase_alpha/beta_chains"/>
</dbReference>
<dbReference type="InterPro" id="IPR004100">
    <property type="entry name" value="ATPase_F1/V1/A1_a/bsu_N"/>
</dbReference>
<dbReference type="InterPro" id="IPR036121">
    <property type="entry name" value="ATPase_F1/V1/A1_a/bsu_N_sf"/>
</dbReference>
<dbReference type="InterPro" id="IPR000194">
    <property type="entry name" value="ATPase_F1/V1/A1_a/bsu_nucl-bd"/>
</dbReference>
<dbReference type="InterPro" id="IPR024034">
    <property type="entry name" value="ATPase_F1/V1_b/a_C"/>
</dbReference>
<dbReference type="InterPro" id="IPR027417">
    <property type="entry name" value="P-loop_NTPase"/>
</dbReference>
<dbReference type="NCBIfam" id="TIGR01039">
    <property type="entry name" value="atpD"/>
    <property type="match status" value="1"/>
</dbReference>
<dbReference type="PANTHER" id="PTHR15184">
    <property type="entry name" value="ATP SYNTHASE"/>
    <property type="match status" value="1"/>
</dbReference>
<dbReference type="PANTHER" id="PTHR15184:SF71">
    <property type="entry name" value="ATP SYNTHASE SUBUNIT BETA, MITOCHONDRIAL"/>
    <property type="match status" value="1"/>
</dbReference>
<dbReference type="Pfam" id="PF00006">
    <property type="entry name" value="ATP-synt_ab"/>
    <property type="match status" value="1"/>
</dbReference>
<dbReference type="Pfam" id="PF02874">
    <property type="entry name" value="ATP-synt_ab_N"/>
    <property type="match status" value="1"/>
</dbReference>
<dbReference type="Pfam" id="PF22919">
    <property type="entry name" value="ATP-synt_VA_C"/>
    <property type="match status" value="1"/>
</dbReference>
<dbReference type="SMART" id="SM00382">
    <property type="entry name" value="AAA"/>
    <property type="match status" value="1"/>
</dbReference>
<dbReference type="SUPFAM" id="SSF47917">
    <property type="entry name" value="C-terminal domain of alpha and beta subunits of F1 ATP synthase"/>
    <property type="match status" value="1"/>
</dbReference>
<dbReference type="SUPFAM" id="SSF50615">
    <property type="entry name" value="N-terminal domain of alpha and beta subunits of F1 ATP synthase"/>
    <property type="match status" value="1"/>
</dbReference>
<dbReference type="SUPFAM" id="SSF52540">
    <property type="entry name" value="P-loop containing nucleoside triphosphate hydrolases"/>
    <property type="match status" value="1"/>
</dbReference>
<dbReference type="PROSITE" id="PS00152">
    <property type="entry name" value="ATPASE_ALPHA_BETA"/>
    <property type="match status" value="1"/>
</dbReference>
<reference key="1">
    <citation type="journal article" date="2006" name="Transgenic Res.">
        <title>Efficient and stable transformation of Lactuca sativa L. cv. Cisco (lettuce) plastids.</title>
        <authorList>
            <person name="Kanamoto H."/>
            <person name="Yamashita A."/>
            <person name="Asao H."/>
            <person name="Okumura S."/>
            <person name="Takase H."/>
            <person name="Hattori M."/>
            <person name="Yokota A."/>
            <person name="Tomizawa K."/>
        </authorList>
    </citation>
    <scope>NUCLEOTIDE SEQUENCE [LARGE SCALE GENOMIC DNA]</scope>
    <source>
        <strain>cv. Cisco</strain>
    </source>
</reference>
<reference key="2">
    <citation type="submission" date="2006-01" db="EMBL/GenBank/DDBJ databases">
        <title>A comparison of the first two published chloroplast genomes in Asteraceae: Lactuca and Helianthus.</title>
        <authorList>
            <person name="Timme R.E."/>
            <person name="Kuehl J.V."/>
            <person name="Boore J.L."/>
            <person name="Jansen R.K."/>
        </authorList>
    </citation>
    <scope>NUCLEOTIDE SEQUENCE [LARGE SCALE GENOMIC DNA]</scope>
    <source>
        <strain>cv. Salinas</strain>
    </source>
</reference>
<feature type="chain" id="PRO_0000254493" description="ATP synthase subunit beta, chloroplastic">
    <location>
        <begin position="1"/>
        <end position="498"/>
    </location>
</feature>
<feature type="binding site" evidence="1">
    <location>
        <begin position="172"/>
        <end position="179"/>
    </location>
    <ligand>
        <name>ATP</name>
        <dbReference type="ChEBI" id="CHEBI:30616"/>
    </ligand>
</feature>
<proteinExistence type="inferred from homology"/>
<geneLocation type="chloroplast"/>
<accession>Q332X1</accession>
<protein>
    <recommendedName>
        <fullName evidence="1">ATP synthase subunit beta, chloroplastic</fullName>
        <ecNumber evidence="1">7.1.2.2</ecNumber>
    </recommendedName>
    <alternativeName>
        <fullName evidence="1">ATP synthase F1 sector subunit beta</fullName>
    </alternativeName>
    <alternativeName>
        <fullName evidence="1">F-ATPase subunit beta</fullName>
    </alternativeName>
</protein>